<feature type="chain" id="PRO_0000152890" description="Sulfur carrier protein FdhD">
    <location>
        <begin position="1"/>
        <end position="262"/>
    </location>
</feature>
<feature type="active site" description="Cysteine persulfide intermediate" evidence="1">
    <location>
        <position position="107"/>
    </location>
</feature>
<keyword id="KW-0963">Cytoplasm</keyword>
<keyword id="KW-0501">Molybdenum cofactor biosynthesis</keyword>
<keyword id="KW-1185">Reference proteome</keyword>
<reference key="1">
    <citation type="journal article" date="1995" name="J. Bacteriol.">
        <title>Identification and isolation of a gene required for nitrate assimilation and anaerobic growth of Bacillus subtilis.</title>
        <authorList>
            <person name="Glaser P."/>
            <person name="Danchin A."/>
            <person name="Kunst F."/>
            <person name="Zuber P."/>
            <person name="Nakano M.M."/>
        </authorList>
    </citation>
    <scope>NUCLEOTIDE SEQUENCE [GENOMIC DNA]</scope>
    <scope>FUNCTION</scope>
    <source>
        <strain>168</strain>
    </source>
</reference>
<reference key="2">
    <citation type="submission" date="1996-10" db="EMBL/GenBank/DDBJ databases">
        <authorList>
            <person name="Glaser P."/>
            <person name="Danchin A."/>
            <person name="Kunst F."/>
            <person name="Moszer I."/>
        </authorList>
    </citation>
    <scope>NUCLEOTIDE SEQUENCE [GENOMIC DNA]</scope>
    <source>
        <strain>168</strain>
    </source>
</reference>
<reference key="3">
    <citation type="journal article" date="1997" name="Nature">
        <title>The complete genome sequence of the Gram-positive bacterium Bacillus subtilis.</title>
        <authorList>
            <person name="Kunst F."/>
            <person name="Ogasawara N."/>
            <person name="Moszer I."/>
            <person name="Albertini A.M."/>
            <person name="Alloni G."/>
            <person name="Azevedo V."/>
            <person name="Bertero M.G."/>
            <person name="Bessieres P."/>
            <person name="Bolotin A."/>
            <person name="Borchert S."/>
            <person name="Borriss R."/>
            <person name="Boursier L."/>
            <person name="Brans A."/>
            <person name="Braun M."/>
            <person name="Brignell S.C."/>
            <person name="Bron S."/>
            <person name="Brouillet S."/>
            <person name="Bruschi C.V."/>
            <person name="Caldwell B."/>
            <person name="Capuano V."/>
            <person name="Carter N.M."/>
            <person name="Choi S.-K."/>
            <person name="Codani J.-J."/>
            <person name="Connerton I.F."/>
            <person name="Cummings N.J."/>
            <person name="Daniel R.A."/>
            <person name="Denizot F."/>
            <person name="Devine K.M."/>
            <person name="Duesterhoeft A."/>
            <person name="Ehrlich S.D."/>
            <person name="Emmerson P.T."/>
            <person name="Entian K.-D."/>
            <person name="Errington J."/>
            <person name="Fabret C."/>
            <person name="Ferrari E."/>
            <person name="Foulger D."/>
            <person name="Fritz C."/>
            <person name="Fujita M."/>
            <person name="Fujita Y."/>
            <person name="Fuma S."/>
            <person name="Galizzi A."/>
            <person name="Galleron N."/>
            <person name="Ghim S.-Y."/>
            <person name="Glaser P."/>
            <person name="Goffeau A."/>
            <person name="Golightly E.J."/>
            <person name="Grandi G."/>
            <person name="Guiseppi G."/>
            <person name="Guy B.J."/>
            <person name="Haga K."/>
            <person name="Haiech J."/>
            <person name="Harwood C.R."/>
            <person name="Henaut A."/>
            <person name="Hilbert H."/>
            <person name="Holsappel S."/>
            <person name="Hosono S."/>
            <person name="Hullo M.-F."/>
            <person name="Itaya M."/>
            <person name="Jones L.-M."/>
            <person name="Joris B."/>
            <person name="Karamata D."/>
            <person name="Kasahara Y."/>
            <person name="Klaerr-Blanchard M."/>
            <person name="Klein C."/>
            <person name="Kobayashi Y."/>
            <person name="Koetter P."/>
            <person name="Koningstein G."/>
            <person name="Krogh S."/>
            <person name="Kumano M."/>
            <person name="Kurita K."/>
            <person name="Lapidus A."/>
            <person name="Lardinois S."/>
            <person name="Lauber J."/>
            <person name="Lazarevic V."/>
            <person name="Lee S.-M."/>
            <person name="Levine A."/>
            <person name="Liu H."/>
            <person name="Masuda S."/>
            <person name="Mauel C."/>
            <person name="Medigue C."/>
            <person name="Medina N."/>
            <person name="Mellado R.P."/>
            <person name="Mizuno M."/>
            <person name="Moestl D."/>
            <person name="Nakai S."/>
            <person name="Noback M."/>
            <person name="Noone D."/>
            <person name="O'Reilly M."/>
            <person name="Ogawa K."/>
            <person name="Ogiwara A."/>
            <person name="Oudega B."/>
            <person name="Park S.-H."/>
            <person name="Parro V."/>
            <person name="Pohl T.M."/>
            <person name="Portetelle D."/>
            <person name="Porwollik S."/>
            <person name="Prescott A.M."/>
            <person name="Presecan E."/>
            <person name="Pujic P."/>
            <person name="Purnelle B."/>
            <person name="Rapoport G."/>
            <person name="Rey M."/>
            <person name="Reynolds S."/>
            <person name="Rieger M."/>
            <person name="Rivolta C."/>
            <person name="Rocha E."/>
            <person name="Roche B."/>
            <person name="Rose M."/>
            <person name="Sadaie Y."/>
            <person name="Sato T."/>
            <person name="Scanlan E."/>
            <person name="Schleich S."/>
            <person name="Schroeter R."/>
            <person name="Scoffone F."/>
            <person name="Sekiguchi J."/>
            <person name="Sekowska A."/>
            <person name="Seror S.J."/>
            <person name="Serror P."/>
            <person name="Shin B.-S."/>
            <person name="Soldo B."/>
            <person name="Sorokin A."/>
            <person name="Tacconi E."/>
            <person name="Takagi T."/>
            <person name="Takahashi H."/>
            <person name="Takemaru K."/>
            <person name="Takeuchi M."/>
            <person name="Tamakoshi A."/>
            <person name="Tanaka T."/>
            <person name="Terpstra P."/>
            <person name="Tognoni A."/>
            <person name="Tosato V."/>
            <person name="Uchiyama S."/>
            <person name="Vandenbol M."/>
            <person name="Vannier F."/>
            <person name="Vassarotti A."/>
            <person name="Viari A."/>
            <person name="Wambutt R."/>
            <person name="Wedler E."/>
            <person name="Wedler H."/>
            <person name="Weitzenegger T."/>
            <person name="Winters P."/>
            <person name="Wipat A."/>
            <person name="Yamamoto H."/>
            <person name="Yamane K."/>
            <person name="Yasumoto K."/>
            <person name="Yata K."/>
            <person name="Yoshida K."/>
            <person name="Yoshikawa H.-F."/>
            <person name="Zumstein E."/>
            <person name="Yoshikawa H."/>
            <person name="Danchin A."/>
        </authorList>
    </citation>
    <scope>NUCLEOTIDE SEQUENCE [LARGE SCALE GENOMIC DNA]</scope>
    <source>
        <strain>168</strain>
    </source>
</reference>
<name>FDHD_BACSU</name>
<comment type="function">
    <text evidence="1 2">Required for formate dehydrogenase (FDH) activity (PubMed:7860592). Acts as a sulfur carrier protein that transfers sulfur from IscS to the molybdenum cofactor prior to its insertion into FDH (By similarity).</text>
</comment>
<comment type="subcellular location">
    <subcellularLocation>
        <location evidence="1">Cytoplasm</location>
    </subcellularLocation>
</comment>
<comment type="similarity">
    <text evidence="1">Belongs to the FdhD family.</text>
</comment>
<gene>
    <name evidence="1" type="primary">fdhD</name>
    <name type="synonym">narAA</name>
    <name evidence="3" type="synonym">narQ</name>
    <name type="ordered locus">BSU36710</name>
</gene>
<proteinExistence type="inferred from homology"/>
<evidence type="ECO:0000255" key="1">
    <source>
        <dbReference type="HAMAP-Rule" id="MF_00187"/>
    </source>
</evidence>
<evidence type="ECO:0000269" key="2">
    <source>
    </source>
</evidence>
<evidence type="ECO:0000303" key="3">
    <source>
    </source>
</evidence>
<dbReference type="EMBL" id="Z35277">
    <property type="protein sequence ID" value="CAA84539.1"/>
    <property type="molecule type" value="Genomic_DNA"/>
</dbReference>
<dbReference type="EMBL" id="Z81356">
    <property type="protein sequence ID" value="CAB03682.1"/>
    <property type="molecule type" value="Genomic_DNA"/>
</dbReference>
<dbReference type="EMBL" id="AL009126">
    <property type="protein sequence ID" value="CAB15688.1"/>
    <property type="molecule type" value="Genomic_DNA"/>
</dbReference>
<dbReference type="PIR" id="B69665">
    <property type="entry name" value="B69665"/>
</dbReference>
<dbReference type="RefSeq" id="NP_391552.1">
    <property type="nucleotide sequence ID" value="NC_000964.3"/>
</dbReference>
<dbReference type="RefSeq" id="WP_003227709.1">
    <property type="nucleotide sequence ID" value="NZ_OZ025638.1"/>
</dbReference>
<dbReference type="SMR" id="P39756"/>
<dbReference type="FunCoup" id="P39756">
    <property type="interactions" value="144"/>
</dbReference>
<dbReference type="STRING" id="224308.BSU36710"/>
<dbReference type="PaxDb" id="224308-BSU36710"/>
<dbReference type="EnsemblBacteria" id="CAB15688">
    <property type="protein sequence ID" value="CAB15688"/>
    <property type="gene ID" value="BSU_36710"/>
</dbReference>
<dbReference type="GeneID" id="936976"/>
<dbReference type="KEGG" id="bsu:BSU36710"/>
<dbReference type="PATRIC" id="fig|224308.179.peg.3974"/>
<dbReference type="eggNOG" id="COG1526">
    <property type="taxonomic scope" value="Bacteria"/>
</dbReference>
<dbReference type="InParanoid" id="P39756"/>
<dbReference type="OrthoDB" id="9782042at2"/>
<dbReference type="PhylomeDB" id="P39756"/>
<dbReference type="BioCyc" id="BSUB:BSU36710-MONOMER"/>
<dbReference type="Proteomes" id="UP000001570">
    <property type="component" value="Chromosome"/>
</dbReference>
<dbReference type="GO" id="GO:0005737">
    <property type="term" value="C:cytoplasm"/>
    <property type="evidence" value="ECO:0007669"/>
    <property type="project" value="UniProtKB-SubCell"/>
</dbReference>
<dbReference type="GO" id="GO:0097163">
    <property type="term" value="F:sulfur carrier activity"/>
    <property type="evidence" value="ECO:0007669"/>
    <property type="project" value="UniProtKB-UniRule"/>
</dbReference>
<dbReference type="GO" id="GO:0016783">
    <property type="term" value="F:sulfurtransferase activity"/>
    <property type="evidence" value="ECO:0007669"/>
    <property type="project" value="InterPro"/>
</dbReference>
<dbReference type="GO" id="GO:0006777">
    <property type="term" value="P:Mo-molybdopterin cofactor biosynthetic process"/>
    <property type="evidence" value="ECO:0007669"/>
    <property type="project" value="UniProtKB-UniRule"/>
</dbReference>
<dbReference type="Gene3D" id="3.10.20.10">
    <property type="match status" value="1"/>
</dbReference>
<dbReference type="Gene3D" id="3.40.140.10">
    <property type="entry name" value="Cytidine Deaminase, domain 2"/>
    <property type="match status" value="1"/>
</dbReference>
<dbReference type="HAMAP" id="MF_00187">
    <property type="entry name" value="FdhD"/>
    <property type="match status" value="1"/>
</dbReference>
<dbReference type="InterPro" id="IPR016193">
    <property type="entry name" value="Cytidine_deaminase-like"/>
</dbReference>
<dbReference type="InterPro" id="IPR003786">
    <property type="entry name" value="FdhD"/>
</dbReference>
<dbReference type="NCBIfam" id="TIGR00129">
    <property type="entry name" value="fdhD_narQ"/>
    <property type="match status" value="1"/>
</dbReference>
<dbReference type="PANTHER" id="PTHR30592">
    <property type="entry name" value="FORMATE DEHYDROGENASE"/>
    <property type="match status" value="1"/>
</dbReference>
<dbReference type="PANTHER" id="PTHR30592:SF1">
    <property type="entry name" value="SULFUR CARRIER PROTEIN FDHD"/>
    <property type="match status" value="1"/>
</dbReference>
<dbReference type="Pfam" id="PF02634">
    <property type="entry name" value="FdhD-NarQ"/>
    <property type="match status" value="1"/>
</dbReference>
<dbReference type="PIRSF" id="PIRSF015626">
    <property type="entry name" value="FdhD"/>
    <property type="match status" value="1"/>
</dbReference>
<dbReference type="SUPFAM" id="SSF53927">
    <property type="entry name" value="Cytidine deaminase-like"/>
    <property type="match status" value="1"/>
</dbReference>
<sequence>MNDKVTAVRDVWRYEQGEISKVEDRMVTEFPLTVILNGSEFVTLVCTPEHIEELVIGFLASEGVIRFQKEIKRFTIDESLGFVYVDLVHPETLDQKDYTKRVIGSCCGKGRHFYFQQDVKTAKTAVSQIKISPEACLALMKDMQQGSGTFQDTGGVHNAALCDTEKLLLMRTDIGRHNALDKLYGHCLLNGMSVRDKLIVFSGRISSEVLLKAAKIGVSIVISKSAPTELAIQMAEELNITAIGFVRNGSFNVYTHPERIRE</sequence>
<accession>P39756</accession>
<protein>
    <recommendedName>
        <fullName evidence="1">Sulfur carrier protein FdhD</fullName>
    </recommendedName>
</protein>
<organism>
    <name type="scientific">Bacillus subtilis (strain 168)</name>
    <dbReference type="NCBI Taxonomy" id="224308"/>
    <lineage>
        <taxon>Bacteria</taxon>
        <taxon>Bacillati</taxon>
        <taxon>Bacillota</taxon>
        <taxon>Bacilli</taxon>
        <taxon>Bacillales</taxon>
        <taxon>Bacillaceae</taxon>
        <taxon>Bacillus</taxon>
    </lineage>
</organism>